<evidence type="ECO:0000255" key="1">
    <source>
        <dbReference type="HAMAP-Rule" id="MF_00270"/>
    </source>
</evidence>
<evidence type="ECO:0000305" key="2"/>
<protein>
    <recommendedName>
        <fullName evidence="1">Small ribosomal subunit protein bS18c</fullName>
    </recommendedName>
    <alternativeName>
        <fullName evidence="2">30S ribosomal protein S18, chloroplastic</fullName>
    </alternativeName>
</protein>
<feature type="chain" id="PRO_0000111308" description="Small ribosomal subunit protein bS18c">
    <location>
        <begin position="1"/>
        <end position="75"/>
    </location>
</feature>
<gene>
    <name evidence="1" type="primary">rps18</name>
</gene>
<geneLocation type="chloroplast"/>
<name>RR18_PSINU</name>
<dbReference type="EMBL" id="AP004638">
    <property type="protein sequence ID" value="BAB84238.1"/>
    <property type="molecule type" value="Genomic_DNA"/>
</dbReference>
<dbReference type="RefSeq" id="NP_569651.1">
    <property type="nucleotide sequence ID" value="NC_003386.1"/>
</dbReference>
<dbReference type="SMR" id="Q8WHZ9"/>
<dbReference type="GeneID" id="2545173"/>
<dbReference type="GO" id="GO:0009507">
    <property type="term" value="C:chloroplast"/>
    <property type="evidence" value="ECO:0007669"/>
    <property type="project" value="UniProtKB-SubCell"/>
</dbReference>
<dbReference type="GO" id="GO:0005763">
    <property type="term" value="C:mitochondrial small ribosomal subunit"/>
    <property type="evidence" value="ECO:0007669"/>
    <property type="project" value="TreeGrafter"/>
</dbReference>
<dbReference type="GO" id="GO:0070181">
    <property type="term" value="F:small ribosomal subunit rRNA binding"/>
    <property type="evidence" value="ECO:0007669"/>
    <property type="project" value="TreeGrafter"/>
</dbReference>
<dbReference type="GO" id="GO:0003735">
    <property type="term" value="F:structural constituent of ribosome"/>
    <property type="evidence" value="ECO:0007669"/>
    <property type="project" value="InterPro"/>
</dbReference>
<dbReference type="GO" id="GO:0006412">
    <property type="term" value="P:translation"/>
    <property type="evidence" value="ECO:0007669"/>
    <property type="project" value="UniProtKB-UniRule"/>
</dbReference>
<dbReference type="FunFam" id="4.10.640.10:FF:000002">
    <property type="entry name" value="30S ribosomal protein S18, chloroplastic"/>
    <property type="match status" value="1"/>
</dbReference>
<dbReference type="Gene3D" id="4.10.640.10">
    <property type="entry name" value="Ribosomal protein S18"/>
    <property type="match status" value="1"/>
</dbReference>
<dbReference type="HAMAP" id="MF_00270">
    <property type="entry name" value="Ribosomal_bS18"/>
    <property type="match status" value="1"/>
</dbReference>
<dbReference type="InterPro" id="IPR001648">
    <property type="entry name" value="Ribosomal_bS18"/>
</dbReference>
<dbReference type="InterPro" id="IPR018275">
    <property type="entry name" value="Ribosomal_bS18_CS"/>
</dbReference>
<dbReference type="InterPro" id="IPR036870">
    <property type="entry name" value="Ribosomal_bS18_sf"/>
</dbReference>
<dbReference type="NCBIfam" id="TIGR00165">
    <property type="entry name" value="S18"/>
    <property type="match status" value="1"/>
</dbReference>
<dbReference type="PANTHER" id="PTHR13479">
    <property type="entry name" value="30S RIBOSOMAL PROTEIN S18"/>
    <property type="match status" value="1"/>
</dbReference>
<dbReference type="PANTHER" id="PTHR13479:SF40">
    <property type="entry name" value="SMALL RIBOSOMAL SUBUNIT PROTEIN BS18M"/>
    <property type="match status" value="1"/>
</dbReference>
<dbReference type="Pfam" id="PF01084">
    <property type="entry name" value="Ribosomal_S18"/>
    <property type="match status" value="1"/>
</dbReference>
<dbReference type="PRINTS" id="PR00974">
    <property type="entry name" value="RIBOSOMALS18"/>
</dbReference>
<dbReference type="SUPFAM" id="SSF46911">
    <property type="entry name" value="Ribosomal protein S18"/>
    <property type="match status" value="1"/>
</dbReference>
<dbReference type="PROSITE" id="PS00057">
    <property type="entry name" value="RIBOSOMAL_S18"/>
    <property type="match status" value="1"/>
</dbReference>
<organism>
    <name type="scientific">Psilotum nudum</name>
    <name type="common">Whisk fern</name>
    <name type="synonym">Lycopodium nudum</name>
    <dbReference type="NCBI Taxonomy" id="3240"/>
    <lineage>
        <taxon>Eukaryota</taxon>
        <taxon>Viridiplantae</taxon>
        <taxon>Streptophyta</taxon>
        <taxon>Embryophyta</taxon>
        <taxon>Tracheophyta</taxon>
        <taxon>Polypodiopsida</taxon>
        <taxon>Ophioglossidae</taxon>
        <taxon>Psilotales</taxon>
        <taxon>Psilotaceae</taxon>
        <taxon>Psilotum</taxon>
    </lineage>
</organism>
<sequence>MKKSERSSRKRLSATVTSDLIDYKNIDLLRRFISERGKILSRRMTKLTSKQQRSVTVSIKRARILALLPFINRDS</sequence>
<reference key="1">
    <citation type="journal article" date="2004" name="Mol. Biol. Evol.">
        <title>Chloroplast phylogeny indicates that bryophytes are monophyletic.</title>
        <authorList>
            <person name="Nishiyama T."/>
            <person name="Wolf P.G."/>
            <person name="Kugita M."/>
            <person name="Sinclair R.B."/>
            <person name="Sugita M."/>
            <person name="Sugiura C."/>
            <person name="Wakasugi T."/>
            <person name="Yamada K."/>
            <person name="Yoshinaga K."/>
            <person name="Yamaguchi K."/>
            <person name="Ueda K."/>
            <person name="Hasebe M."/>
        </authorList>
    </citation>
    <scope>NUCLEOTIDE SEQUENCE [LARGE SCALE GENOMIC DNA]</scope>
    <source>
        <strain>Kingyoku</strain>
    </source>
</reference>
<keyword id="KW-0150">Chloroplast</keyword>
<keyword id="KW-0934">Plastid</keyword>
<keyword id="KW-0687">Ribonucleoprotein</keyword>
<keyword id="KW-0689">Ribosomal protein</keyword>
<keyword id="KW-0694">RNA-binding</keyword>
<keyword id="KW-0699">rRNA-binding</keyword>
<comment type="subunit">
    <text>Part of the 30S ribosomal subunit.</text>
</comment>
<comment type="subcellular location">
    <subcellularLocation>
        <location>Plastid</location>
        <location>Chloroplast</location>
    </subcellularLocation>
</comment>
<comment type="similarity">
    <text evidence="1">Belongs to the bacterial ribosomal protein bS18 family.</text>
</comment>
<proteinExistence type="inferred from homology"/>
<accession>Q8WHZ9</accession>